<proteinExistence type="inferred from homology"/>
<name>KGUA_METFK</name>
<keyword id="KW-0067">ATP-binding</keyword>
<keyword id="KW-0963">Cytoplasm</keyword>
<keyword id="KW-0418">Kinase</keyword>
<keyword id="KW-0547">Nucleotide-binding</keyword>
<keyword id="KW-1185">Reference proteome</keyword>
<keyword id="KW-0808">Transferase</keyword>
<evidence type="ECO:0000255" key="1">
    <source>
        <dbReference type="HAMAP-Rule" id="MF_00328"/>
    </source>
</evidence>
<reference key="1">
    <citation type="submission" date="2006-03" db="EMBL/GenBank/DDBJ databases">
        <title>Complete sequence of Methylobacillus flagellatus KT.</title>
        <authorList>
            <consortium name="US DOE Joint Genome Institute"/>
            <person name="Copeland A."/>
            <person name="Lucas S."/>
            <person name="Lapidus A."/>
            <person name="Barry K."/>
            <person name="Detter J.C."/>
            <person name="Glavina del Rio T."/>
            <person name="Hammon N."/>
            <person name="Israni S."/>
            <person name="Dalin E."/>
            <person name="Tice H."/>
            <person name="Pitluck S."/>
            <person name="Brettin T."/>
            <person name="Bruce D."/>
            <person name="Han C."/>
            <person name="Tapia R."/>
            <person name="Saunders E."/>
            <person name="Gilna P."/>
            <person name="Schmutz J."/>
            <person name="Larimer F."/>
            <person name="Land M."/>
            <person name="Kyrpides N."/>
            <person name="Anderson I."/>
            <person name="Richardson P."/>
        </authorList>
    </citation>
    <scope>NUCLEOTIDE SEQUENCE [LARGE SCALE GENOMIC DNA]</scope>
    <source>
        <strain>ATCC 51484 / DSM 6875 / VKM B-1610 / KT</strain>
    </source>
</reference>
<feature type="chain" id="PRO_0000266348" description="Guanylate kinase">
    <location>
        <begin position="1"/>
        <end position="202"/>
    </location>
</feature>
<feature type="domain" description="Guanylate kinase-like" evidence="1">
    <location>
        <begin position="3"/>
        <end position="181"/>
    </location>
</feature>
<feature type="binding site" evidence="1">
    <location>
        <begin position="10"/>
        <end position="17"/>
    </location>
    <ligand>
        <name>ATP</name>
        <dbReference type="ChEBI" id="CHEBI:30616"/>
    </ligand>
</feature>
<protein>
    <recommendedName>
        <fullName evidence="1">Guanylate kinase</fullName>
        <ecNumber evidence="1">2.7.4.8</ecNumber>
    </recommendedName>
    <alternativeName>
        <fullName evidence="1">GMP kinase</fullName>
    </alternativeName>
</protein>
<sequence>MKGNLFIITAPSGAGKTSLVRALLDGDEHIKLSVSHTTRKPRPGEEDGVHYHFVEEARFVELLNHGDFLESAQVHGAYYGTSQSTVNSALAEGYDLILEIDWQGAQQVRSLYADAISIFILPPSMEALEQRLNNRAQDSAEVIARRLAAAREEMRHVTEFDYVTINDRFEHALEDLRAIIRSQRLRREKQLIRYQDVVQKLL</sequence>
<comment type="function">
    <text evidence="1">Essential for recycling GMP and indirectly, cGMP.</text>
</comment>
<comment type="catalytic activity">
    <reaction evidence="1">
        <text>GMP + ATP = GDP + ADP</text>
        <dbReference type="Rhea" id="RHEA:20780"/>
        <dbReference type="ChEBI" id="CHEBI:30616"/>
        <dbReference type="ChEBI" id="CHEBI:58115"/>
        <dbReference type="ChEBI" id="CHEBI:58189"/>
        <dbReference type="ChEBI" id="CHEBI:456216"/>
        <dbReference type="EC" id="2.7.4.8"/>
    </reaction>
</comment>
<comment type="subcellular location">
    <subcellularLocation>
        <location evidence="1">Cytoplasm</location>
    </subcellularLocation>
</comment>
<comment type="similarity">
    <text evidence="1">Belongs to the guanylate kinase family.</text>
</comment>
<gene>
    <name evidence="1" type="primary">gmk</name>
    <name type="ordered locus">Mfla_0048</name>
</gene>
<organism>
    <name type="scientific">Methylobacillus flagellatus (strain ATCC 51484 / DSM 6875 / VKM B-1610 / KT)</name>
    <dbReference type="NCBI Taxonomy" id="265072"/>
    <lineage>
        <taxon>Bacteria</taxon>
        <taxon>Pseudomonadati</taxon>
        <taxon>Pseudomonadota</taxon>
        <taxon>Betaproteobacteria</taxon>
        <taxon>Nitrosomonadales</taxon>
        <taxon>Methylophilaceae</taxon>
        <taxon>Methylobacillus</taxon>
    </lineage>
</organism>
<dbReference type="EC" id="2.7.4.8" evidence="1"/>
<dbReference type="EMBL" id="CP000284">
    <property type="protein sequence ID" value="ABE48319.1"/>
    <property type="molecule type" value="Genomic_DNA"/>
</dbReference>
<dbReference type="RefSeq" id="WP_011478416.1">
    <property type="nucleotide sequence ID" value="NC_007947.1"/>
</dbReference>
<dbReference type="SMR" id="Q1GXB9"/>
<dbReference type="STRING" id="265072.Mfla_0048"/>
<dbReference type="KEGG" id="mfa:Mfla_0048"/>
<dbReference type="eggNOG" id="COG0194">
    <property type="taxonomic scope" value="Bacteria"/>
</dbReference>
<dbReference type="HOGENOM" id="CLU_001715_1_0_4"/>
<dbReference type="OrthoDB" id="9808150at2"/>
<dbReference type="Proteomes" id="UP000002440">
    <property type="component" value="Chromosome"/>
</dbReference>
<dbReference type="GO" id="GO:0005829">
    <property type="term" value="C:cytosol"/>
    <property type="evidence" value="ECO:0007669"/>
    <property type="project" value="TreeGrafter"/>
</dbReference>
<dbReference type="GO" id="GO:0005524">
    <property type="term" value="F:ATP binding"/>
    <property type="evidence" value="ECO:0007669"/>
    <property type="project" value="UniProtKB-UniRule"/>
</dbReference>
<dbReference type="GO" id="GO:0004385">
    <property type="term" value="F:guanylate kinase activity"/>
    <property type="evidence" value="ECO:0007669"/>
    <property type="project" value="UniProtKB-UniRule"/>
</dbReference>
<dbReference type="CDD" id="cd00071">
    <property type="entry name" value="GMPK"/>
    <property type="match status" value="1"/>
</dbReference>
<dbReference type="FunFam" id="3.30.63.10:FF:000002">
    <property type="entry name" value="Guanylate kinase 1"/>
    <property type="match status" value="1"/>
</dbReference>
<dbReference type="Gene3D" id="3.30.63.10">
    <property type="entry name" value="Guanylate Kinase phosphate binding domain"/>
    <property type="match status" value="1"/>
</dbReference>
<dbReference type="Gene3D" id="3.40.50.300">
    <property type="entry name" value="P-loop containing nucleotide triphosphate hydrolases"/>
    <property type="match status" value="1"/>
</dbReference>
<dbReference type="HAMAP" id="MF_00328">
    <property type="entry name" value="Guanylate_kinase"/>
    <property type="match status" value="1"/>
</dbReference>
<dbReference type="InterPro" id="IPR008145">
    <property type="entry name" value="GK/Ca_channel_bsu"/>
</dbReference>
<dbReference type="InterPro" id="IPR008144">
    <property type="entry name" value="Guanylate_kin-like_dom"/>
</dbReference>
<dbReference type="InterPro" id="IPR017665">
    <property type="entry name" value="Guanylate_kinase"/>
</dbReference>
<dbReference type="InterPro" id="IPR020590">
    <property type="entry name" value="Guanylate_kinase_CS"/>
</dbReference>
<dbReference type="InterPro" id="IPR027417">
    <property type="entry name" value="P-loop_NTPase"/>
</dbReference>
<dbReference type="NCBIfam" id="TIGR03263">
    <property type="entry name" value="guanyl_kin"/>
    <property type="match status" value="1"/>
</dbReference>
<dbReference type="PANTHER" id="PTHR23117:SF13">
    <property type="entry name" value="GUANYLATE KINASE"/>
    <property type="match status" value="1"/>
</dbReference>
<dbReference type="PANTHER" id="PTHR23117">
    <property type="entry name" value="GUANYLATE KINASE-RELATED"/>
    <property type="match status" value="1"/>
</dbReference>
<dbReference type="Pfam" id="PF00625">
    <property type="entry name" value="Guanylate_kin"/>
    <property type="match status" value="1"/>
</dbReference>
<dbReference type="SMART" id="SM00072">
    <property type="entry name" value="GuKc"/>
    <property type="match status" value="1"/>
</dbReference>
<dbReference type="SUPFAM" id="SSF52540">
    <property type="entry name" value="P-loop containing nucleoside triphosphate hydrolases"/>
    <property type="match status" value="1"/>
</dbReference>
<dbReference type="PROSITE" id="PS00856">
    <property type="entry name" value="GUANYLATE_KINASE_1"/>
    <property type="match status" value="1"/>
</dbReference>
<dbReference type="PROSITE" id="PS50052">
    <property type="entry name" value="GUANYLATE_KINASE_2"/>
    <property type="match status" value="1"/>
</dbReference>
<accession>Q1GXB9</accession>